<evidence type="ECO:0000255" key="1">
    <source>
        <dbReference type="HAMAP-Rule" id="MF_00122"/>
    </source>
</evidence>
<accession>B1YPV9</accession>
<feature type="chain" id="PRO_1000095264" description="Aspartyl/glutamyl-tRNA(Asn/Gln) amidotransferase subunit C">
    <location>
        <begin position="1"/>
        <end position="99"/>
    </location>
</feature>
<proteinExistence type="inferred from homology"/>
<sequence>MALTLTDVKRIAHLARLEMADADAEHMLGQLNEFFGLVEQMQAVDTAGIAPLAHPIEQIQEVAQRLRDDAVTEVVNRDDNQRPAPAVQDGLYLVPKVIE</sequence>
<protein>
    <recommendedName>
        <fullName evidence="1">Aspartyl/glutamyl-tRNA(Asn/Gln) amidotransferase subunit C</fullName>
        <shortName evidence="1">Asp/Glu-ADT subunit C</shortName>
        <ecNumber evidence="1">6.3.5.-</ecNumber>
    </recommendedName>
</protein>
<keyword id="KW-0067">ATP-binding</keyword>
<keyword id="KW-0436">Ligase</keyword>
<keyword id="KW-0547">Nucleotide-binding</keyword>
<keyword id="KW-0648">Protein biosynthesis</keyword>
<gene>
    <name evidence="1" type="primary">gatC</name>
    <name type="ordered locus">BamMC406_3047</name>
</gene>
<organism>
    <name type="scientific">Burkholderia ambifaria (strain MC40-6)</name>
    <dbReference type="NCBI Taxonomy" id="398577"/>
    <lineage>
        <taxon>Bacteria</taxon>
        <taxon>Pseudomonadati</taxon>
        <taxon>Pseudomonadota</taxon>
        <taxon>Betaproteobacteria</taxon>
        <taxon>Burkholderiales</taxon>
        <taxon>Burkholderiaceae</taxon>
        <taxon>Burkholderia</taxon>
        <taxon>Burkholderia cepacia complex</taxon>
    </lineage>
</organism>
<dbReference type="EC" id="6.3.5.-" evidence="1"/>
<dbReference type="EMBL" id="CP001025">
    <property type="protein sequence ID" value="ACB65523.1"/>
    <property type="molecule type" value="Genomic_DNA"/>
</dbReference>
<dbReference type="RefSeq" id="WP_006477478.1">
    <property type="nucleotide sequence ID" value="NC_010551.1"/>
</dbReference>
<dbReference type="SMR" id="B1YPV9"/>
<dbReference type="GeneID" id="93084644"/>
<dbReference type="KEGG" id="bac:BamMC406_3047"/>
<dbReference type="HOGENOM" id="CLU_105899_2_2_4"/>
<dbReference type="OrthoDB" id="9794326at2"/>
<dbReference type="Proteomes" id="UP000001680">
    <property type="component" value="Chromosome 1"/>
</dbReference>
<dbReference type="GO" id="GO:0050566">
    <property type="term" value="F:asparaginyl-tRNA synthase (glutamine-hydrolyzing) activity"/>
    <property type="evidence" value="ECO:0007669"/>
    <property type="project" value="RHEA"/>
</dbReference>
<dbReference type="GO" id="GO:0005524">
    <property type="term" value="F:ATP binding"/>
    <property type="evidence" value="ECO:0007669"/>
    <property type="project" value="UniProtKB-KW"/>
</dbReference>
<dbReference type="GO" id="GO:0050567">
    <property type="term" value="F:glutaminyl-tRNA synthase (glutamine-hydrolyzing) activity"/>
    <property type="evidence" value="ECO:0007669"/>
    <property type="project" value="UniProtKB-UniRule"/>
</dbReference>
<dbReference type="GO" id="GO:0070681">
    <property type="term" value="P:glutaminyl-tRNAGln biosynthesis via transamidation"/>
    <property type="evidence" value="ECO:0007669"/>
    <property type="project" value="TreeGrafter"/>
</dbReference>
<dbReference type="GO" id="GO:0006450">
    <property type="term" value="P:regulation of translational fidelity"/>
    <property type="evidence" value="ECO:0007669"/>
    <property type="project" value="InterPro"/>
</dbReference>
<dbReference type="GO" id="GO:0006412">
    <property type="term" value="P:translation"/>
    <property type="evidence" value="ECO:0007669"/>
    <property type="project" value="UniProtKB-UniRule"/>
</dbReference>
<dbReference type="Gene3D" id="1.10.20.60">
    <property type="entry name" value="Glu-tRNAGln amidotransferase C subunit, N-terminal domain"/>
    <property type="match status" value="1"/>
</dbReference>
<dbReference type="HAMAP" id="MF_00122">
    <property type="entry name" value="GatC"/>
    <property type="match status" value="1"/>
</dbReference>
<dbReference type="InterPro" id="IPR036113">
    <property type="entry name" value="Asp/Glu-ADT_sf_sub_c"/>
</dbReference>
<dbReference type="InterPro" id="IPR003837">
    <property type="entry name" value="GatC"/>
</dbReference>
<dbReference type="NCBIfam" id="TIGR00135">
    <property type="entry name" value="gatC"/>
    <property type="match status" value="1"/>
</dbReference>
<dbReference type="PANTHER" id="PTHR15004">
    <property type="entry name" value="GLUTAMYL-TRNA(GLN) AMIDOTRANSFERASE SUBUNIT C, MITOCHONDRIAL"/>
    <property type="match status" value="1"/>
</dbReference>
<dbReference type="PANTHER" id="PTHR15004:SF0">
    <property type="entry name" value="GLUTAMYL-TRNA(GLN) AMIDOTRANSFERASE SUBUNIT C, MITOCHONDRIAL"/>
    <property type="match status" value="1"/>
</dbReference>
<dbReference type="Pfam" id="PF02686">
    <property type="entry name" value="GatC"/>
    <property type="match status" value="1"/>
</dbReference>
<dbReference type="SUPFAM" id="SSF141000">
    <property type="entry name" value="Glu-tRNAGln amidotransferase C subunit"/>
    <property type="match status" value="1"/>
</dbReference>
<comment type="function">
    <text evidence="1">Allows the formation of correctly charged Asn-tRNA(Asn) or Gln-tRNA(Gln) through the transamidation of misacylated Asp-tRNA(Asn) or Glu-tRNA(Gln) in organisms which lack either or both of asparaginyl-tRNA or glutaminyl-tRNA synthetases. The reaction takes place in the presence of glutamine and ATP through an activated phospho-Asp-tRNA(Asn) or phospho-Glu-tRNA(Gln).</text>
</comment>
<comment type="catalytic activity">
    <reaction evidence="1">
        <text>L-glutamyl-tRNA(Gln) + L-glutamine + ATP + H2O = L-glutaminyl-tRNA(Gln) + L-glutamate + ADP + phosphate + H(+)</text>
        <dbReference type="Rhea" id="RHEA:17521"/>
        <dbReference type="Rhea" id="RHEA-COMP:9681"/>
        <dbReference type="Rhea" id="RHEA-COMP:9684"/>
        <dbReference type="ChEBI" id="CHEBI:15377"/>
        <dbReference type="ChEBI" id="CHEBI:15378"/>
        <dbReference type="ChEBI" id="CHEBI:29985"/>
        <dbReference type="ChEBI" id="CHEBI:30616"/>
        <dbReference type="ChEBI" id="CHEBI:43474"/>
        <dbReference type="ChEBI" id="CHEBI:58359"/>
        <dbReference type="ChEBI" id="CHEBI:78520"/>
        <dbReference type="ChEBI" id="CHEBI:78521"/>
        <dbReference type="ChEBI" id="CHEBI:456216"/>
    </reaction>
</comment>
<comment type="catalytic activity">
    <reaction evidence="1">
        <text>L-aspartyl-tRNA(Asn) + L-glutamine + ATP + H2O = L-asparaginyl-tRNA(Asn) + L-glutamate + ADP + phosphate + 2 H(+)</text>
        <dbReference type="Rhea" id="RHEA:14513"/>
        <dbReference type="Rhea" id="RHEA-COMP:9674"/>
        <dbReference type="Rhea" id="RHEA-COMP:9677"/>
        <dbReference type="ChEBI" id="CHEBI:15377"/>
        <dbReference type="ChEBI" id="CHEBI:15378"/>
        <dbReference type="ChEBI" id="CHEBI:29985"/>
        <dbReference type="ChEBI" id="CHEBI:30616"/>
        <dbReference type="ChEBI" id="CHEBI:43474"/>
        <dbReference type="ChEBI" id="CHEBI:58359"/>
        <dbReference type="ChEBI" id="CHEBI:78515"/>
        <dbReference type="ChEBI" id="CHEBI:78516"/>
        <dbReference type="ChEBI" id="CHEBI:456216"/>
    </reaction>
</comment>
<comment type="subunit">
    <text evidence="1">Heterotrimer of A, B and C subunits.</text>
</comment>
<comment type="similarity">
    <text evidence="1">Belongs to the GatC family.</text>
</comment>
<reference key="1">
    <citation type="submission" date="2008-04" db="EMBL/GenBank/DDBJ databases">
        <title>Complete sequence of chromosome 1 of Burkholderia ambifaria MC40-6.</title>
        <authorList>
            <person name="Copeland A."/>
            <person name="Lucas S."/>
            <person name="Lapidus A."/>
            <person name="Glavina del Rio T."/>
            <person name="Dalin E."/>
            <person name="Tice H."/>
            <person name="Pitluck S."/>
            <person name="Chain P."/>
            <person name="Malfatti S."/>
            <person name="Shin M."/>
            <person name="Vergez L."/>
            <person name="Lang D."/>
            <person name="Schmutz J."/>
            <person name="Larimer F."/>
            <person name="Land M."/>
            <person name="Hauser L."/>
            <person name="Kyrpides N."/>
            <person name="Lykidis A."/>
            <person name="Ramette A."/>
            <person name="Konstantinidis K."/>
            <person name="Tiedje J."/>
            <person name="Richardson P."/>
        </authorList>
    </citation>
    <scope>NUCLEOTIDE SEQUENCE [LARGE SCALE GENOMIC DNA]</scope>
    <source>
        <strain>MC40-6</strain>
    </source>
</reference>
<name>GATC_BURA4</name>